<keyword id="KW-1185">Reference proteome</keyword>
<keyword id="KW-0687">Ribonucleoprotein</keyword>
<keyword id="KW-0689">Ribosomal protein</keyword>
<keyword id="KW-0694">RNA-binding</keyword>
<keyword id="KW-0699">rRNA-binding</keyword>
<name>RL15_FERNB</name>
<proteinExistence type="inferred from homology"/>
<sequence>MITIEDLKPTPGSNKKYKRLGRGQGSGKGKTAGKGHKGQKSRGTGKVRAWMEGGQTPLHRRLPKFGFKNFTKKFYAVVNLETLEEKFDSNAVVTPEVLIEKGIIDKIYDGVKILARGEITKPLTVKAHKFSEKAKEKIEKVGGKIEVI</sequence>
<protein>
    <recommendedName>
        <fullName evidence="1">Large ribosomal subunit protein uL15</fullName>
    </recommendedName>
    <alternativeName>
        <fullName evidence="3">50S ribosomal protein L15</fullName>
    </alternativeName>
</protein>
<reference key="1">
    <citation type="submission" date="2007-07" db="EMBL/GenBank/DDBJ databases">
        <title>Complete sequence of Fervidobacterium nodosum Rt17-B1.</title>
        <authorList>
            <consortium name="US DOE Joint Genome Institute"/>
            <person name="Copeland A."/>
            <person name="Lucas S."/>
            <person name="Lapidus A."/>
            <person name="Barry K."/>
            <person name="Glavina del Rio T."/>
            <person name="Dalin E."/>
            <person name="Tice H."/>
            <person name="Pitluck S."/>
            <person name="Saunders E."/>
            <person name="Brettin T."/>
            <person name="Bruce D."/>
            <person name="Detter J.C."/>
            <person name="Han C."/>
            <person name="Schmutz J."/>
            <person name="Larimer F."/>
            <person name="Land M."/>
            <person name="Hauser L."/>
            <person name="Kyrpides N."/>
            <person name="Mikhailova N."/>
            <person name="Nelson K."/>
            <person name="Gogarten J.P."/>
            <person name="Noll K."/>
            <person name="Richardson P."/>
        </authorList>
    </citation>
    <scope>NUCLEOTIDE SEQUENCE [LARGE SCALE GENOMIC DNA]</scope>
    <source>
        <strain>ATCC 35602 / DSM 5306 / Rt17-B1</strain>
    </source>
</reference>
<comment type="function">
    <text evidence="1">Binds to the 23S rRNA.</text>
</comment>
<comment type="subunit">
    <text evidence="1">Part of the 50S ribosomal subunit.</text>
</comment>
<comment type="similarity">
    <text evidence="1">Belongs to the universal ribosomal protein uL15 family.</text>
</comment>
<dbReference type="EMBL" id="CP000771">
    <property type="protein sequence ID" value="ABS60966.1"/>
    <property type="molecule type" value="Genomic_DNA"/>
</dbReference>
<dbReference type="SMR" id="A7HM33"/>
<dbReference type="STRING" id="381764.Fnod_1119"/>
<dbReference type="KEGG" id="fno:Fnod_1119"/>
<dbReference type="eggNOG" id="COG0200">
    <property type="taxonomic scope" value="Bacteria"/>
</dbReference>
<dbReference type="HOGENOM" id="CLU_055188_4_2_0"/>
<dbReference type="Proteomes" id="UP000002415">
    <property type="component" value="Chromosome"/>
</dbReference>
<dbReference type="GO" id="GO:0022625">
    <property type="term" value="C:cytosolic large ribosomal subunit"/>
    <property type="evidence" value="ECO:0007669"/>
    <property type="project" value="TreeGrafter"/>
</dbReference>
<dbReference type="GO" id="GO:0019843">
    <property type="term" value="F:rRNA binding"/>
    <property type="evidence" value="ECO:0007669"/>
    <property type="project" value="UniProtKB-UniRule"/>
</dbReference>
<dbReference type="GO" id="GO:0003735">
    <property type="term" value="F:structural constituent of ribosome"/>
    <property type="evidence" value="ECO:0007669"/>
    <property type="project" value="InterPro"/>
</dbReference>
<dbReference type="GO" id="GO:0006412">
    <property type="term" value="P:translation"/>
    <property type="evidence" value="ECO:0007669"/>
    <property type="project" value="UniProtKB-UniRule"/>
</dbReference>
<dbReference type="Gene3D" id="3.100.10.10">
    <property type="match status" value="1"/>
</dbReference>
<dbReference type="HAMAP" id="MF_01341">
    <property type="entry name" value="Ribosomal_uL15"/>
    <property type="match status" value="1"/>
</dbReference>
<dbReference type="InterPro" id="IPR030878">
    <property type="entry name" value="Ribosomal_uL15"/>
</dbReference>
<dbReference type="InterPro" id="IPR021131">
    <property type="entry name" value="Ribosomal_uL15/eL18"/>
</dbReference>
<dbReference type="InterPro" id="IPR036227">
    <property type="entry name" value="Ribosomal_uL15/eL18_sf"/>
</dbReference>
<dbReference type="InterPro" id="IPR005749">
    <property type="entry name" value="Ribosomal_uL15_bac-type"/>
</dbReference>
<dbReference type="InterPro" id="IPR001196">
    <property type="entry name" value="Ribosomal_uL15_CS"/>
</dbReference>
<dbReference type="NCBIfam" id="TIGR01071">
    <property type="entry name" value="rplO_bact"/>
    <property type="match status" value="1"/>
</dbReference>
<dbReference type="PANTHER" id="PTHR12934">
    <property type="entry name" value="50S RIBOSOMAL PROTEIN L15"/>
    <property type="match status" value="1"/>
</dbReference>
<dbReference type="PANTHER" id="PTHR12934:SF11">
    <property type="entry name" value="LARGE RIBOSOMAL SUBUNIT PROTEIN UL15M"/>
    <property type="match status" value="1"/>
</dbReference>
<dbReference type="Pfam" id="PF00828">
    <property type="entry name" value="Ribosomal_L27A"/>
    <property type="match status" value="1"/>
</dbReference>
<dbReference type="SUPFAM" id="SSF52080">
    <property type="entry name" value="Ribosomal proteins L15p and L18e"/>
    <property type="match status" value="1"/>
</dbReference>
<dbReference type="PROSITE" id="PS00475">
    <property type="entry name" value="RIBOSOMAL_L15"/>
    <property type="match status" value="1"/>
</dbReference>
<organism>
    <name type="scientific">Fervidobacterium nodosum (strain ATCC 35602 / DSM 5306 / Rt17-B1)</name>
    <dbReference type="NCBI Taxonomy" id="381764"/>
    <lineage>
        <taxon>Bacteria</taxon>
        <taxon>Thermotogati</taxon>
        <taxon>Thermotogota</taxon>
        <taxon>Thermotogae</taxon>
        <taxon>Thermotogales</taxon>
        <taxon>Fervidobacteriaceae</taxon>
        <taxon>Fervidobacterium</taxon>
    </lineage>
</organism>
<feature type="chain" id="PRO_1000142821" description="Large ribosomal subunit protein uL15">
    <location>
        <begin position="1"/>
        <end position="148"/>
    </location>
</feature>
<feature type="region of interest" description="Disordered" evidence="2">
    <location>
        <begin position="1"/>
        <end position="46"/>
    </location>
</feature>
<feature type="compositionally biased region" description="Basic residues" evidence="2">
    <location>
        <begin position="31"/>
        <end position="45"/>
    </location>
</feature>
<gene>
    <name evidence="1" type="primary">rplO</name>
    <name type="ordered locus">Fnod_1119</name>
</gene>
<evidence type="ECO:0000255" key="1">
    <source>
        <dbReference type="HAMAP-Rule" id="MF_01341"/>
    </source>
</evidence>
<evidence type="ECO:0000256" key="2">
    <source>
        <dbReference type="SAM" id="MobiDB-lite"/>
    </source>
</evidence>
<evidence type="ECO:0000305" key="3"/>
<accession>A7HM33</accession>